<gene>
    <name evidence="1" type="primary">glnS</name>
    <name type="ordered locus">VCM66_0953</name>
</gene>
<sequence length="556" mass="64089">MSEAEARPSNFIRQIIDKDLADGKHTTVHTRFPPEPNGYLHIGHAKSICLNFGIAQDYQGQCNLRFDDTNPEKENLEYVESIKKDVTWLGFDWSGEVCYSSDYFDKLYEYAIELIQKGLAYVDELTPEQIREYRGTLTEPGKHSPYRDRSVEENLALFEKMRAGEFAEGQACLRAKIDMASSFIVMRDPVLYRVRFAEHHQTGDKWCIYPMYDFTHCISDALEGITHSICTLEFQDNRRLYDWVLDNITIPCHPRQYEFSRLNLEYTVMSKRKLNQLVTEKLVTGWDDPRMPTISGLRRRGFTPSAIREFCKRIGVTKQENMIEYSALESCIRDDLNENAPRAMAVLDPVKLVIENFAAGTVETLTLANHPNKPEMGDREVPFTRELWIEREDFREEANKKYKRLVLGKEVRLRGAYVIKAERIEKDEQGNITTIFCSYDPETLGKNPADGRKVKGVIHWVSAEKGVPAEFRLYERLFTVPNPGAADNFAETINPESLVKVQGYVEPSLVEAKPEFGYQFERMGYFCADNKDSSPQALVFNRTVGLRDSFAKIDEE</sequence>
<evidence type="ECO:0000255" key="1">
    <source>
        <dbReference type="HAMAP-Rule" id="MF_00126"/>
    </source>
</evidence>
<keyword id="KW-0030">Aminoacyl-tRNA synthetase</keyword>
<keyword id="KW-0067">ATP-binding</keyword>
<keyword id="KW-0963">Cytoplasm</keyword>
<keyword id="KW-0436">Ligase</keyword>
<keyword id="KW-0547">Nucleotide-binding</keyword>
<keyword id="KW-0648">Protein biosynthesis</keyword>
<name>SYQ_VIBCM</name>
<reference key="1">
    <citation type="journal article" date="2008" name="PLoS ONE">
        <title>A recalibrated molecular clock and independent origins for the cholera pandemic clones.</title>
        <authorList>
            <person name="Feng L."/>
            <person name="Reeves P.R."/>
            <person name="Lan R."/>
            <person name="Ren Y."/>
            <person name="Gao C."/>
            <person name="Zhou Z."/>
            <person name="Ren Y."/>
            <person name="Cheng J."/>
            <person name="Wang W."/>
            <person name="Wang J."/>
            <person name="Qian W."/>
            <person name="Li D."/>
            <person name="Wang L."/>
        </authorList>
    </citation>
    <scope>NUCLEOTIDE SEQUENCE [LARGE SCALE GENOMIC DNA]</scope>
    <source>
        <strain>M66-2</strain>
    </source>
</reference>
<feature type="chain" id="PRO_1000199104" description="Glutamine--tRNA ligase">
    <location>
        <begin position="1"/>
        <end position="556"/>
    </location>
</feature>
<feature type="short sequence motif" description="'HIGH' region" evidence="1">
    <location>
        <begin position="34"/>
        <end position="44"/>
    </location>
</feature>
<feature type="short sequence motif" description="'KMSKS' region" evidence="1">
    <location>
        <begin position="268"/>
        <end position="272"/>
    </location>
</feature>
<feature type="binding site" evidence="1">
    <location>
        <begin position="35"/>
        <end position="37"/>
    </location>
    <ligand>
        <name>ATP</name>
        <dbReference type="ChEBI" id="CHEBI:30616"/>
    </ligand>
</feature>
<feature type="binding site" evidence="1">
    <location>
        <begin position="41"/>
        <end position="47"/>
    </location>
    <ligand>
        <name>ATP</name>
        <dbReference type="ChEBI" id="CHEBI:30616"/>
    </ligand>
</feature>
<feature type="binding site" evidence="1">
    <location>
        <position position="67"/>
    </location>
    <ligand>
        <name>L-glutamine</name>
        <dbReference type="ChEBI" id="CHEBI:58359"/>
    </ligand>
</feature>
<feature type="binding site" evidence="1">
    <location>
        <position position="212"/>
    </location>
    <ligand>
        <name>L-glutamine</name>
        <dbReference type="ChEBI" id="CHEBI:58359"/>
    </ligand>
</feature>
<feature type="binding site" evidence="1">
    <location>
        <position position="231"/>
    </location>
    <ligand>
        <name>ATP</name>
        <dbReference type="ChEBI" id="CHEBI:30616"/>
    </ligand>
</feature>
<feature type="binding site" evidence="1">
    <location>
        <begin position="261"/>
        <end position="262"/>
    </location>
    <ligand>
        <name>ATP</name>
        <dbReference type="ChEBI" id="CHEBI:30616"/>
    </ligand>
</feature>
<feature type="binding site" evidence="1">
    <location>
        <begin position="269"/>
        <end position="271"/>
    </location>
    <ligand>
        <name>ATP</name>
        <dbReference type="ChEBI" id="CHEBI:30616"/>
    </ligand>
</feature>
<accession>C3LTP5</accession>
<proteinExistence type="inferred from homology"/>
<dbReference type="EC" id="6.1.1.18" evidence="1"/>
<dbReference type="EMBL" id="CP001233">
    <property type="protein sequence ID" value="ACP05271.1"/>
    <property type="molecule type" value="Genomic_DNA"/>
</dbReference>
<dbReference type="RefSeq" id="WP_001287115.1">
    <property type="nucleotide sequence ID" value="NC_012578.1"/>
</dbReference>
<dbReference type="SMR" id="C3LTP5"/>
<dbReference type="GeneID" id="89514898"/>
<dbReference type="KEGG" id="vcm:VCM66_0953"/>
<dbReference type="HOGENOM" id="CLU_001882_2_3_6"/>
<dbReference type="Proteomes" id="UP000001217">
    <property type="component" value="Chromosome I"/>
</dbReference>
<dbReference type="GO" id="GO:0005829">
    <property type="term" value="C:cytosol"/>
    <property type="evidence" value="ECO:0007669"/>
    <property type="project" value="TreeGrafter"/>
</dbReference>
<dbReference type="GO" id="GO:0005524">
    <property type="term" value="F:ATP binding"/>
    <property type="evidence" value="ECO:0007669"/>
    <property type="project" value="UniProtKB-UniRule"/>
</dbReference>
<dbReference type="GO" id="GO:0004819">
    <property type="term" value="F:glutamine-tRNA ligase activity"/>
    <property type="evidence" value="ECO:0007669"/>
    <property type="project" value="UniProtKB-UniRule"/>
</dbReference>
<dbReference type="GO" id="GO:0006425">
    <property type="term" value="P:glutaminyl-tRNA aminoacylation"/>
    <property type="evidence" value="ECO:0007669"/>
    <property type="project" value="InterPro"/>
</dbReference>
<dbReference type="GO" id="GO:0006424">
    <property type="term" value="P:glutamyl-tRNA aminoacylation"/>
    <property type="evidence" value="ECO:0007669"/>
    <property type="project" value="UniProtKB-UniRule"/>
</dbReference>
<dbReference type="CDD" id="cd00807">
    <property type="entry name" value="GlnRS_core"/>
    <property type="match status" value="1"/>
</dbReference>
<dbReference type="FunFam" id="1.10.1160.10:FF:000001">
    <property type="entry name" value="Glutamine--tRNA ligase"/>
    <property type="match status" value="1"/>
</dbReference>
<dbReference type="FunFam" id="2.40.240.10:FF:000001">
    <property type="entry name" value="Glutamine--tRNA ligase"/>
    <property type="match status" value="1"/>
</dbReference>
<dbReference type="FunFam" id="2.40.240.10:FF:000003">
    <property type="entry name" value="Glutamine--tRNA ligase"/>
    <property type="match status" value="1"/>
</dbReference>
<dbReference type="FunFam" id="3.90.800.10:FF:000001">
    <property type="entry name" value="Glutamine--tRNA ligase"/>
    <property type="match status" value="1"/>
</dbReference>
<dbReference type="FunFam" id="3.40.50.620:FF:000037">
    <property type="entry name" value="Glutamine--tRNA ligase cytoplasmic"/>
    <property type="match status" value="1"/>
</dbReference>
<dbReference type="Gene3D" id="1.10.1160.10">
    <property type="entry name" value="Glutamyl-trna Synthetase, Domain 2"/>
    <property type="match status" value="1"/>
</dbReference>
<dbReference type="Gene3D" id="3.90.800.10">
    <property type="entry name" value="Glutamyl-tRNA Synthetase, Domain 3"/>
    <property type="match status" value="1"/>
</dbReference>
<dbReference type="Gene3D" id="3.40.50.620">
    <property type="entry name" value="HUPs"/>
    <property type="match status" value="1"/>
</dbReference>
<dbReference type="Gene3D" id="2.40.240.10">
    <property type="entry name" value="Ribosomal Protein L25, Chain P"/>
    <property type="match status" value="2"/>
</dbReference>
<dbReference type="HAMAP" id="MF_00126">
    <property type="entry name" value="Gln_tRNA_synth"/>
    <property type="match status" value="1"/>
</dbReference>
<dbReference type="InterPro" id="IPR001412">
    <property type="entry name" value="aa-tRNA-synth_I_CS"/>
</dbReference>
<dbReference type="InterPro" id="IPR004514">
    <property type="entry name" value="Gln-tRNA-synth"/>
</dbReference>
<dbReference type="InterPro" id="IPR050132">
    <property type="entry name" value="Gln/Glu-tRNA_Ligase"/>
</dbReference>
<dbReference type="InterPro" id="IPR022861">
    <property type="entry name" value="Gln_tRNA_ligase_bac"/>
</dbReference>
<dbReference type="InterPro" id="IPR000924">
    <property type="entry name" value="Glu/Gln-tRNA-synth"/>
</dbReference>
<dbReference type="InterPro" id="IPR020058">
    <property type="entry name" value="Glu/Gln-tRNA-synth_Ib_cat-dom"/>
</dbReference>
<dbReference type="InterPro" id="IPR020059">
    <property type="entry name" value="Glu/Gln-tRNA-synth_Ib_codon-bd"/>
</dbReference>
<dbReference type="InterPro" id="IPR020061">
    <property type="entry name" value="Glu_tRNA_lig_a-bdl"/>
</dbReference>
<dbReference type="InterPro" id="IPR020056">
    <property type="entry name" value="Rbsml_bL25/Gln-tRNA_synth_N"/>
</dbReference>
<dbReference type="InterPro" id="IPR011035">
    <property type="entry name" value="Ribosomal_bL25/Gln-tRNA_synth"/>
</dbReference>
<dbReference type="InterPro" id="IPR014729">
    <property type="entry name" value="Rossmann-like_a/b/a_fold"/>
</dbReference>
<dbReference type="InterPro" id="IPR049437">
    <property type="entry name" value="tRNA-synt_1c_C2"/>
</dbReference>
<dbReference type="NCBIfam" id="TIGR00440">
    <property type="entry name" value="glnS"/>
    <property type="match status" value="1"/>
</dbReference>
<dbReference type="NCBIfam" id="NF011291">
    <property type="entry name" value="PRK14703.1"/>
    <property type="match status" value="1"/>
</dbReference>
<dbReference type="PANTHER" id="PTHR43097:SF5">
    <property type="entry name" value="GLUTAMATE--TRNA LIGASE"/>
    <property type="match status" value="1"/>
</dbReference>
<dbReference type="PANTHER" id="PTHR43097">
    <property type="entry name" value="GLUTAMINE-TRNA LIGASE"/>
    <property type="match status" value="1"/>
</dbReference>
<dbReference type="Pfam" id="PF00749">
    <property type="entry name" value="tRNA-synt_1c"/>
    <property type="match status" value="1"/>
</dbReference>
<dbReference type="Pfam" id="PF03950">
    <property type="entry name" value="tRNA-synt_1c_C"/>
    <property type="match status" value="1"/>
</dbReference>
<dbReference type="Pfam" id="PF20974">
    <property type="entry name" value="tRNA-synt_1c_C2"/>
    <property type="match status" value="1"/>
</dbReference>
<dbReference type="PRINTS" id="PR00987">
    <property type="entry name" value="TRNASYNTHGLU"/>
</dbReference>
<dbReference type="SUPFAM" id="SSF52374">
    <property type="entry name" value="Nucleotidylyl transferase"/>
    <property type="match status" value="1"/>
</dbReference>
<dbReference type="SUPFAM" id="SSF50715">
    <property type="entry name" value="Ribosomal protein L25-like"/>
    <property type="match status" value="1"/>
</dbReference>
<dbReference type="PROSITE" id="PS00178">
    <property type="entry name" value="AA_TRNA_LIGASE_I"/>
    <property type="match status" value="1"/>
</dbReference>
<organism>
    <name type="scientific">Vibrio cholerae serotype O1 (strain M66-2)</name>
    <dbReference type="NCBI Taxonomy" id="579112"/>
    <lineage>
        <taxon>Bacteria</taxon>
        <taxon>Pseudomonadati</taxon>
        <taxon>Pseudomonadota</taxon>
        <taxon>Gammaproteobacteria</taxon>
        <taxon>Vibrionales</taxon>
        <taxon>Vibrionaceae</taxon>
        <taxon>Vibrio</taxon>
    </lineage>
</organism>
<comment type="catalytic activity">
    <reaction evidence="1">
        <text>tRNA(Gln) + L-glutamine + ATP = L-glutaminyl-tRNA(Gln) + AMP + diphosphate</text>
        <dbReference type="Rhea" id="RHEA:20121"/>
        <dbReference type="Rhea" id="RHEA-COMP:9662"/>
        <dbReference type="Rhea" id="RHEA-COMP:9681"/>
        <dbReference type="ChEBI" id="CHEBI:30616"/>
        <dbReference type="ChEBI" id="CHEBI:33019"/>
        <dbReference type="ChEBI" id="CHEBI:58359"/>
        <dbReference type="ChEBI" id="CHEBI:78442"/>
        <dbReference type="ChEBI" id="CHEBI:78521"/>
        <dbReference type="ChEBI" id="CHEBI:456215"/>
        <dbReference type="EC" id="6.1.1.18"/>
    </reaction>
</comment>
<comment type="subunit">
    <text evidence="1">Monomer.</text>
</comment>
<comment type="subcellular location">
    <subcellularLocation>
        <location evidence="1">Cytoplasm</location>
    </subcellularLocation>
</comment>
<comment type="similarity">
    <text evidence="1">Belongs to the class-I aminoacyl-tRNA synthetase family.</text>
</comment>
<protein>
    <recommendedName>
        <fullName evidence="1">Glutamine--tRNA ligase</fullName>
        <ecNumber evidence="1">6.1.1.18</ecNumber>
    </recommendedName>
    <alternativeName>
        <fullName evidence="1">Glutaminyl-tRNA synthetase</fullName>
        <shortName evidence="1">GlnRS</shortName>
    </alternativeName>
</protein>